<organism>
    <name type="scientific">Ovis aries</name>
    <name type="common">Sheep</name>
    <dbReference type="NCBI Taxonomy" id="9940"/>
    <lineage>
        <taxon>Eukaryota</taxon>
        <taxon>Metazoa</taxon>
        <taxon>Chordata</taxon>
        <taxon>Craniata</taxon>
        <taxon>Vertebrata</taxon>
        <taxon>Euteleostomi</taxon>
        <taxon>Mammalia</taxon>
        <taxon>Eutheria</taxon>
        <taxon>Laurasiatheria</taxon>
        <taxon>Artiodactyla</taxon>
        <taxon>Ruminantia</taxon>
        <taxon>Pecora</taxon>
        <taxon>Bovidae</taxon>
        <taxon>Caprinae</taxon>
        <taxon>Ovis</taxon>
    </lineage>
</organism>
<name>RSSA_SHEEP</name>
<protein>
    <recommendedName>
        <fullName evidence="3">Small ribosomal subunit protein uS2</fullName>
    </recommendedName>
    <alternativeName>
        <fullName evidence="3">37 kDa laminin receptor precursor</fullName>
        <shortName evidence="3">37LRP</shortName>
    </alternativeName>
    <alternativeName>
        <fullName evidence="3">37/67 kDa laminin receptor</fullName>
        <shortName evidence="3">LRP/LR</shortName>
    </alternativeName>
    <alternativeName>
        <fullName evidence="5">40S ribosomal protein SA</fullName>
    </alternativeName>
    <alternativeName>
        <fullName evidence="3">67 kDa laminin receptor</fullName>
        <shortName evidence="3">67LR</shortName>
    </alternativeName>
    <alternativeName>
        <fullName evidence="3">Laminin receptor 1</fullName>
        <shortName evidence="3">LamR</shortName>
    </alternativeName>
    <alternativeName>
        <fullName evidence="3">Laminin-binding protein precursor p40</fullName>
        <shortName evidence="3">LBP/p40</shortName>
    </alternativeName>
</protein>
<evidence type="ECO:0000250" key="1">
    <source>
        <dbReference type="UniProtKB" id="P08865"/>
    </source>
</evidence>
<evidence type="ECO:0000250" key="2">
    <source>
        <dbReference type="UniProtKB" id="P14206"/>
    </source>
</evidence>
<evidence type="ECO:0000255" key="3">
    <source>
        <dbReference type="HAMAP-Rule" id="MF_03016"/>
    </source>
</evidence>
<evidence type="ECO:0000256" key="4">
    <source>
        <dbReference type="SAM" id="MobiDB-lite"/>
    </source>
</evidence>
<evidence type="ECO:0000305" key="5"/>
<dbReference type="EMBL" id="EF649775">
    <property type="protein sequence ID" value="ABR57322.1"/>
    <property type="molecule type" value="mRNA"/>
</dbReference>
<dbReference type="EMBL" id="EF222474">
    <property type="protein sequence ID" value="ABQ42346.1"/>
    <property type="molecule type" value="mRNA"/>
</dbReference>
<dbReference type="RefSeq" id="NP_001098733.1">
    <property type="nucleotide sequence ID" value="NM_001105263.1"/>
</dbReference>
<dbReference type="SMR" id="A6YRY8"/>
<dbReference type="STRING" id="9940.ENSOARP00000002610"/>
<dbReference type="GeneID" id="100125628"/>
<dbReference type="KEGG" id="oas:100125628"/>
<dbReference type="CTD" id="3921"/>
<dbReference type="OrthoDB" id="9928405at2759"/>
<dbReference type="Proteomes" id="UP000002356">
    <property type="component" value="Unplaced"/>
</dbReference>
<dbReference type="GO" id="GO:0005737">
    <property type="term" value="C:cytoplasm"/>
    <property type="evidence" value="ECO:0000250"/>
    <property type="project" value="UniProtKB"/>
</dbReference>
<dbReference type="GO" id="GO:0022627">
    <property type="term" value="C:cytosolic small ribosomal subunit"/>
    <property type="evidence" value="ECO:0007669"/>
    <property type="project" value="UniProtKB-UniRule"/>
</dbReference>
<dbReference type="GO" id="GO:0005634">
    <property type="term" value="C:nucleus"/>
    <property type="evidence" value="ECO:0007669"/>
    <property type="project" value="UniProtKB-SubCell"/>
</dbReference>
<dbReference type="GO" id="GO:0005886">
    <property type="term" value="C:plasma membrane"/>
    <property type="evidence" value="ECO:0000250"/>
    <property type="project" value="UniProtKB"/>
</dbReference>
<dbReference type="GO" id="GO:0043236">
    <property type="term" value="F:laminin binding"/>
    <property type="evidence" value="ECO:0007669"/>
    <property type="project" value="UniProtKB-UniRule"/>
</dbReference>
<dbReference type="GO" id="GO:0005055">
    <property type="term" value="F:laminin receptor activity"/>
    <property type="evidence" value="ECO:0007669"/>
    <property type="project" value="UniProtKB-UniRule"/>
</dbReference>
<dbReference type="GO" id="GO:0003735">
    <property type="term" value="F:structural constituent of ribosome"/>
    <property type="evidence" value="ECO:0007669"/>
    <property type="project" value="UniProtKB-UniRule"/>
</dbReference>
<dbReference type="GO" id="GO:0000028">
    <property type="term" value="P:ribosomal small subunit assembly"/>
    <property type="evidence" value="ECO:0007669"/>
    <property type="project" value="UniProtKB-UniRule"/>
</dbReference>
<dbReference type="GO" id="GO:0006412">
    <property type="term" value="P:translation"/>
    <property type="evidence" value="ECO:0007669"/>
    <property type="project" value="UniProtKB-UniRule"/>
</dbReference>
<dbReference type="CDD" id="cd01425">
    <property type="entry name" value="RPS2"/>
    <property type="match status" value="1"/>
</dbReference>
<dbReference type="FunFam" id="3.40.50.10490:FF:000012">
    <property type="entry name" value="40S ribosomal protein SA"/>
    <property type="match status" value="1"/>
</dbReference>
<dbReference type="Gene3D" id="3.40.50.10490">
    <property type="entry name" value="Glucose-6-phosphate isomerase like protein, domain 1"/>
    <property type="match status" value="1"/>
</dbReference>
<dbReference type="HAMAP" id="MF_03015">
    <property type="entry name" value="Ribosomal_S2_euk"/>
    <property type="match status" value="1"/>
</dbReference>
<dbReference type="HAMAP" id="MF_03016">
    <property type="entry name" value="Ribosomal_S2_laminin_receptor"/>
    <property type="match status" value="1"/>
</dbReference>
<dbReference type="InterPro" id="IPR001865">
    <property type="entry name" value="Ribosomal_uS2"/>
</dbReference>
<dbReference type="InterPro" id="IPR032281">
    <property type="entry name" value="Ribosomal_uS2_C"/>
</dbReference>
<dbReference type="InterPro" id="IPR018130">
    <property type="entry name" value="Ribosomal_uS2_CS"/>
</dbReference>
<dbReference type="InterPro" id="IPR027498">
    <property type="entry name" value="Ribosomal_uS2_euk"/>
</dbReference>
<dbReference type="InterPro" id="IPR005707">
    <property type="entry name" value="Ribosomal_uS2_euk/arc"/>
</dbReference>
<dbReference type="InterPro" id="IPR023591">
    <property type="entry name" value="Ribosomal_uS2_flav_dom_sf"/>
</dbReference>
<dbReference type="InterPro" id="IPR027504">
    <property type="entry name" value="Ribosomal_uS2_vert"/>
</dbReference>
<dbReference type="NCBIfam" id="TIGR01012">
    <property type="entry name" value="uS2_euk_arch"/>
    <property type="match status" value="1"/>
</dbReference>
<dbReference type="PANTHER" id="PTHR11489">
    <property type="entry name" value="40S RIBOSOMAL PROTEIN SA"/>
    <property type="match status" value="1"/>
</dbReference>
<dbReference type="Pfam" id="PF16122">
    <property type="entry name" value="40S_SA_C"/>
    <property type="match status" value="1"/>
</dbReference>
<dbReference type="Pfam" id="PF00318">
    <property type="entry name" value="Ribosomal_S2"/>
    <property type="match status" value="2"/>
</dbReference>
<dbReference type="PRINTS" id="PR00395">
    <property type="entry name" value="RIBOSOMALS2"/>
</dbReference>
<dbReference type="SUPFAM" id="SSF52313">
    <property type="entry name" value="Ribosomal protein S2"/>
    <property type="match status" value="1"/>
</dbReference>
<dbReference type="PROSITE" id="PS00962">
    <property type="entry name" value="RIBOSOMAL_S2_1"/>
    <property type="match status" value="1"/>
</dbReference>
<dbReference type="PROSITE" id="PS00963">
    <property type="entry name" value="RIBOSOMAL_S2_2"/>
    <property type="match status" value="1"/>
</dbReference>
<sequence>MSGALDVLQMKEEDVLKFLAAGTHLGGTNLDFQMEQYIYKRKSDGIYIINLKRTWEKLLLAARAIVAIENPADVSVISSRNTGQRAVLKFAAATGATPIAGRFTPGTFTNQIQAAFREPRLLVVTDPRADHQPLTEASYVNLPTIALCNTDSPLRYVDIAIPCNNKGAHSVGLMWWMLAREVLRMRGTISREHPWEVMPDLYFYRDPEEIEKEEQAAAEKAVTKEEFQGEWTAPAPEFTAAQPEVADWSEGVQVPSVPIQQFPTEDWSARPFTEDWSAAPTAQATEWVGTTSELS</sequence>
<proteinExistence type="evidence at transcript level"/>
<keyword id="KW-0007">Acetylation</keyword>
<keyword id="KW-1003">Cell membrane</keyword>
<keyword id="KW-0963">Cytoplasm</keyword>
<keyword id="KW-1017">Isopeptide bond</keyword>
<keyword id="KW-0472">Membrane</keyword>
<keyword id="KW-0539">Nucleus</keyword>
<keyword id="KW-0597">Phosphoprotein</keyword>
<keyword id="KW-0675">Receptor</keyword>
<keyword id="KW-1185">Reference proteome</keyword>
<keyword id="KW-0677">Repeat</keyword>
<keyword id="KW-0687">Ribonucleoprotein</keyword>
<keyword id="KW-0689">Ribosomal protein</keyword>
<keyword id="KW-0832">Ubl conjugation</keyword>
<accession>A6YRY8</accession>
<accession>B0L420</accession>
<feature type="initiator methionine" description="Removed" evidence="3">
    <location>
        <position position="1"/>
    </location>
</feature>
<feature type="chain" id="PRO_0000319321" description="Small ribosomal subunit protein uS2">
    <location>
        <begin position="2"/>
        <end position="295"/>
    </location>
</feature>
<feature type="repeat" description="[DE]-W-[ST] 1">
    <location>
        <begin position="230"/>
        <end position="232"/>
    </location>
</feature>
<feature type="repeat" description="[DE]-W-[ST] 2">
    <location>
        <begin position="247"/>
        <end position="249"/>
    </location>
</feature>
<feature type="repeat" description="[DE]-W-[ST] 3">
    <location>
        <begin position="266"/>
        <end position="268"/>
    </location>
</feature>
<feature type="repeat" description="[DE]-W-[ST] 4">
    <location>
        <begin position="275"/>
        <end position="277"/>
    </location>
</feature>
<feature type="region of interest" description="Interaction with PPP1R16B" evidence="3">
    <location>
        <begin position="54"/>
        <end position="113"/>
    </location>
</feature>
<feature type="region of interest" description="Laminin-binding" evidence="3">
    <location>
        <begin position="161"/>
        <end position="180"/>
    </location>
</feature>
<feature type="region of interest" description="Laminin-binding" evidence="3">
    <location>
        <begin position="205"/>
        <end position="229"/>
    </location>
</feature>
<feature type="region of interest" description="Disordered" evidence="4">
    <location>
        <begin position="214"/>
        <end position="240"/>
    </location>
</feature>
<feature type="region of interest" description="Laminin-binding" evidence="3">
    <location>
        <begin position="242"/>
        <end position="295"/>
    </location>
</feature>
<feature type="region of interest" description="Disordered" evidence="4">
    <location>
        <begin position="263"/>
        <end position="295"/>
    </location>
</feature>
<feature type="compositionally biased region" description="Basic and acidic residues" evidence="4">
    <location>
        <begin position="214"/>
        <end position="227"/>
    </location>
</feature>
<feature type="compositionally biased region" description="Polar residues" evidence="4">
    <location>
        <begin position="280"/>
        <end position="295"/>
    </location>
</feature>
<feature type="site" description="Cleavage; by ST3; site 1" evidence="3">
    <location>
        <begin position="115"/>
        <end position="116"/>
    </location>
</feature>
<feature type="site" description="Cleavage; by ST3; site 2" evidence="3">
    <location>
        <begin position="133"/>
        <end position="134"/>
    </location>
</feature>
<feature type="modified residue" description="N-acetylserine" evidence="1 3">
    <location>
        <position position="2"/>
    </location>
</feature>
<feature type="modified residue" description="Phosphoserine" evidence="1">
    <location>
        <position position="43"/>
    </location>
</feature>
<feature type="modified residue" description="N6-acetyllysine" evidence="1">
    <location>
        <position position="52"/>
    </location>
</feature>
<feature type="modified residue" description="N6-acetyllysine; alternate" evidence="2">
    <location>
        <position position="89"/>
    </location>
</feature>
<feature type="modified residue" description="Phosphothreonine" evidence="1">
    <location>
        <position position="97"/>
    </location>
</feature>
<feature type="cross-link" description="Glycyl lysine isopeptide (Lys-Gly) (interchain with G-Cter in SUMO2); alternate" evidence="1">
    <location>
        <position position="89"/>
    </location>
</feature>
<reference key="1">
    <citation type="submission" date="2007-06" db="EMBL/GenBank/DDBJ databases">
        <title>Cloning and sequence analysis of Ovis aries laminin receptor 1.</title>
        <authorList>
            <person name="Qiao J."/>
            <person name="Zhao D."/>
            <person name="Li Y."/>
        </authorList>
    </citation>
    <scope>NUCLEOTIDE SEQUENCE [MRNA]</scope>
</reference>
<reference key="2">
    <citation type="journal article" date="2008" name="Mamm. Genome">
        <title>Structural and functional analysis of the ovine laminin receptor gene (RPSA): Possible involvement of the LRP/LR protein in scrapie response.</title>
        <authorList>
            <person name="Marcos-Carcavilla A."/>
            <person name="Calvo J.H."/>
            <person name="Gonzalez C."/>
            <person name="Serrano C."/>
            <person name="Moazami-Goudarzi K."/>
            <person name="Laurent P."/>
            <person name="Bertaud M."/>
            <person name="Hayes H."/>
            <person name="Beattie A.E."/>
            <person name="Lyahyai J."/>
            <person name="Martin-Burriel I."/>
            <person name="Torres J.M."/>
            <person name="Serrano M."/>
        </authorList>
    </citation>
    <scope>NUCLEOTIDE SEQUENCE [MRNA] OF 24-250</scope>
</reference>
<comment type="function">
    <text evidence="3">Required for the assembly and/or stability of the 40S ribosomal subunit. Required for the processing of the 20S rRNA-precursor to mature 18S rRNA in a late step of the maturation of 40S ribosomal subunits. Also functions as a cell surface receptor for laminin. Plays a role in cell adhesion to the basement membrane and in the consequent activation of signaling transduction pathways. May play a role in cell fate determination and tissue morphogenesis. Also acts as a receptor for several other ligands, including the pathogenic prion protein, viruses, and bacteria. Acts as a PPP1R16B-dependent substrate of PPP1CA.</text>
</comment>
<comment type="subunit">
    <text evidence="3">Monomer (37LRP) and homodimer (67LR). Component of the small ribosomal subunit. Mature ribosomes consist of a small (40S) and a large (60S) subunit. The 40S subunit contains about 33 different proteins and 1 molecule of RNA (18S). The 60S subunit contains about 49 different proteins and 3 molecules of RNA (28S, 5.8S and 5S). Interacts with RPS21. Interacts with several laminins including at least LAMB1. Interacts with MDK. The mature dimeric form interacts with PPP1R16B (via its fourth ankyrin repeat). Interacts with PPP1CA only in the presence of PPP1R16B.</text>
</comment>
<comment type="subcellular location">
    <subcellularLocation>
        <location evidence="3">Cell membrane</location>
    </subcellularLocation>
    <subcellularLocation>
        <location evidence="3">Cytoplasm</location>
    </subcellularLocation>
    <subcellularLocation>
        <location evidence="3">Nucleus</location>
    </subcellularLocation>
    <text evidence="3">67LR is found at the surface of the plasma membrane, with its C-terminal laminin-binding domain accessible to extracellular ligands. 37LRP is found at the cell surface, in the cytoplasm and in the nucleus. Co-localizes with PPP1R16B in the cell membrane.</text>
</comment>
<comment type="PTM">
    <text evidence="3">Acylated. Acylation may be a prerequisite for conversion of the monomeric 37 kDa laminin receptor precursor (37LRP) to the mature dimeric 67 kDa laminin receptor (67LR), and may provide a mechanism for membrane association.</text>
</comment>
<comment type="PTM">
    <text evidence="3">Cleaved by stromelysin-3 (ST3) at the cell surface. Cleavage by stromelysin-3 may be a mechanism to alter cell-extracellular matrix interactions.</text>
</comment>
<comment type="miscellaneous">
    <text>This protein appears to have acquired a second function as a laminin receptor specifically in the vertebrate lineage.</text>
</comment>
<comment type="miscellaneous">
    <text>It is thought that in vertebrates 37/67 kDa laminin receptor acquired a dual function during evolution. It developed from the ribosomal protein SA, playing an essential role in the protein biosynthesis lacking any laminin binding activity, to a cell surface receptor with laminin binding activity.</text>
</comment>
<comment type="similarity">
    <text evidence="3">Belongs to the universal ribosomal protein uS2 family.</text>
</comment>
<gene>
    <name evidence="3" type="primary">RPSA</name>
    <name type="synonym">LAMR1</name>
</gene>